<reference key="1">
    <citation type="journal article" date="1991" name="Virology">
        <title>Genome organization of membrane-containing bacteriophage PRD1.</title>
        <authorList>
            <person name="Bamford J.K.H."/>
            <person name="Haenninen A.-L."/>
            <person name="Pakula T.M."/>
            <person name="Ojala P.M."/>
            <person name="Kalkkinen N."/>
            <person name="Frilander M."/>
            <person name="Bamford D.H."/>
        </authorList>
    </citation>
    <scope>NUCLEOTIDE SEQUENCE [GENOMIC DNA]</scope>
    <scope>PROTEIN SEQUENCE OF 1-9</scope>
</reference>
<reference key="2">
    <citation type="journal article" date="2005" name="J. Mol. Biol.">
        <title>A snapshot of viral evolution from genome analysis of the tectiviridae family.</title>
        <authorList>
            <person name="Saren A.M."/>
            <person name="Ravantti J.J."/>
            <person name="Benson S.D."/>
            <person name="Burnett R.M."/>
            <person name="Paulin L."/>
            <person name="Bamford D.H."/>
            <person name="Bamford J.K.H."/>
        </authorList>
    </citation>
    <scope>NUCLEOTIDE SEQUENCE [GENOMIC DNA]</scope>
</reference>
<reference key="3">
    <citation type="journal article" date="2003" name="J. Virol.">
        <title>The unique vertex of bacterial virus PRD1 is connected to the viral internal membrane.</title>
        <authorList>
            <person name="Stromsten N.J."/>
            <person name="Bamford D.H."/>
            <person name="Bamford J.K.H."/>
        </authorList>
    </citation>
    <scope>SUBCELLULAR LOCATION</scope>
    <scope>IDENTIFICATION IN THE PORTAL COMPLEX</scope>
</reference>
<reference key="4">
    <citation type="journal article" date="2014" name="PLoS Biol.">
        <title>A structural model of the genome packaging process in a membrane-containing double stranded DNA virus.</title>
        <authorList>
            <person name="Hong C."/>
            <person name="Oksanen H.M."/>
            <person name="Liu X."/>
            <person name="Jakana J."/>
            <person name="Bamford D.H."/>
            <person name="Chiu W."/>
        </authorList>
    </citation>
    <scope>FUNCTION</scope>
    <scope>SUBUNIT</scope>
    <scope>IDENTIFICATION IN THE PORTAL COMPLEX</scope>
</reference>
<comment type="function">
    <text evidence="3">Together with P22, forms the internal part of the portal complex embeded in the virion internal membrane and which plays critical roles in genome packaging and genome ejection. Both proteins multimerize as a single ring-shaped heterdodecamer arranged around a central channel and interact with the P6/P9 external part of the portal.</text>
</comment>
<comment type="subunit">
    <text evidence="2 3">Heterodimer of P20 and P22; further multimerizes as hexamers of heterodimers. Part of the dodecameric portal complex that is composed of the packaging efficiency factor P6, the DNA packaging ATPase P9, and the internal heterododecamer P20/P22 which spans the virion inner membrane.</text>
</comment>
<comment type="subcellular location">
    <subcellularLocation>
        <location>Virion membrane</location>
        <topology>Single-pass membrane protein</topology>
    </subcellularLocation>
    <text evidence="2">Part of the capsid inner membrane. Binds the portal complex at the capsid vertex.</text>
</comment>
<feature type="chain" id="PRO_0000165359" description="Packaging protein P22">
    <location>
        <begin position="1"/>
        <end position="47"/>
    </location>
</feature>
<feature type="transmembrane region" description="Helical" evidence="1">
    <location>
        <begin position="22"/>
        <end position="42"/>
    </location>
</feature>
<sequence length="47" mass="5493">MQLITDMAEWSSKPFRPDMSLTGWLAFVGLIIVAIILWQQIIRFIIE</sequence>
<dbReference type="EMBL" id="AY848689">
    <property type="protein sequence ID" value="AAX45915.1"/>
    <property type="molecule type" value="Genomic_DNA"/>
</dbReference>
<dbReference type="PIR" id="E36776">
    <property type="entry name" value="WMBPKB"/>
</dbReference>
<dbReference type="RefSeq" id="NP_040694.1">
    <property type="nucleotide sequence ID" value="NC_001421.2"/>
</dbReference>
<dbReference type="RefSeq" id="YP_009639969.1">
    <property type="nucleotide sequence ID" value="NC_001421.2"/>
</dbReference>
<dbReference type="SMR" id="P27388"/>
<dbReference type="GeneID" id="1260947"/>
<dbReference type="Proteomes" id="UP000002143">
    <property type="component" value="Segment"/>
</dbReference>
<dbReference type="GO" id="GO:0016020">
    <property type="term" value="C:membrane"/>
    <property type="evidence" value="ECO:0007669"/>
    <property type="project" value="UniProtKB-KW"/>
</dbReference>
<dbReference type="GO" id="GO:0039641">
    <property type="term" value="C:viral inner membrane"/>
    <property type="evidence" value="ECO:0007669"/>
    <property type="project" value="UniProtKB-KW"/>
</dbReference>
<dbReference type="GO" id="GO:0055036">
    <property type="term" value="C:virion membrane"/>
    <property type="evidence" value="ECO:0007669"/>
    <property type="project" value="UniProtKB-SubCell"/>
</dbReference>
<organism>
    <name type="scientific">Enterobacteria phage PRD1</name>
    <name type="common">Bacteriophage PRD1</name>
    <dbReference type="NCBI Taxonomy" id="10658"/>
    <lineage>
        <taxon>Viruses</taxon>
        <taxon>Varidnaviria</taxon>
        <taxon>Bamfordvirae</taxon>
        <taxon>Preplasmiviricota</taxon>
        <taxon>Tectiliviricetes</taxon>
        <taxon>Kalamavirales</taxon>
        <taxon>Tectiviridae</taxon>
        <taxon>Alphatectivirus</taxon>
        <taxon>Alphatectivirus PRD1</taxon>
    </lineage>
</organism>
<evidence type="ECO:0000255" key="1"/>
<evidence type="ECO:0000269" key="2">
    <source>
    </source>
</evidence>
<evidence type="ECO:0000269" key="3">
    <source>
    </source>
</evidence>
<protein>
    <recommendedName>
        <fullName>Packaging protein P22</fullName>
    </recommendedName>
    <alternativeName>
        <fullName>GpK</fullName>
    </alternativeName>
    <alternativeName>
        <fullName>Protein K</fullName>
    </alternativeName>
</protein>
<keyword id="KW-1231">Capsid inner membrane protein</keyword>
<keyword id="KW-0903">Direct protein sequencing</keyword>
<keyword id="KW-0472">Membrane</keyword>
<keyword id="KW-1185">Reference proteome</keyword>
<keyword id="KW-0812">Transmembrane</keyword>
<keyword id="KW-1133">Transmembrane helix</keyword>
<keyword id="KW-0231">Viral genome packaging</keyword>
<keyword id="KW-1188">Viral release from host cell</keyword>
<keyword id="KW-0946">Virion</keyword>
<name>PKG22_BPPRD</name>
<organismHost>
    <name type="scientific">Acinetobacter calcoaceticus</name>
    <dbReference type="NCBI Taxonomy" id="471"/>
</organismHost>
<organismHost>
    <name type="scientific">Escherichia coli</name>
    <dbReference type="NCBI Taxonomy" id="562"/>
</organismHost>
<organismHost>
    <name type="scientific">Proteus mirabilis</name>
    <dbReference type="NCBI Taxonomy" id="584"/>
</organismHost>
<organismHost>
    <name type="scientific">Pseudomonas aeruginosa</name>
    <dbReference type="NCBI Taxonomy" id="287"/>
</organismHost>
<organismHost>
    <name type="scientific">Pseudomonas fluorescens</name>
    <dbReference type="NCBI Taxonomy" id="294"/>
</organismHost>
<organismHost>
    <name type="scientific">Pseudomonas putida</name>
    <name type="common">Arthrobacter siderocapsulatus</name>
    <dbReference type="NCBI Taxonomy" id="303"/>
</organismHost>
<organismHost>
    <name type="scientific">Salmonella typhimurium</name>
    <dbReference type="NCBI Taxonomy" id="90371"/>
</organismHost>
<organismHost>
    <name type="scientific">Vibrio cholerae</name>
    <dbReference type="NCBI Taxonomy" id="666"/>
</organismHost>
<proteinExistence type="evidence at protein level"/>
<accession>P27388</accession>
<accession>Q3T4N1</accession>
<gene>
    <name type="primary">XXII</name>
    <name type="synonym">K</name>
</gene>